<accession>A0QH59</accession>
<dbReference type="EMBL" id="CP000479">
    <property type="protein sequence ID" value="ABK64761.1"/>
    <property type="molecule type" value="Genomic_DNA"/>
</dbReference>
<dbReference type="RefSeq" id="WP_009977234.1">
    <property type="nucleotide sequence ID" value="NC_008595.1"/>
</dbReference>
<dbReference type="SMR" id="A0QH59"/>
<dbReference type="KEGG" id="mav:MAV_3063"/>
<dbReference type="HOGENOM" id="CLU_016077_6_2_11"/>
<dbReference type="Proteomes" id="UP000001574">
    <property type="component" value="Chromosome"/>
</dbReference>
<dbReference type="GO" id="GO:0016887">
    <property type="term" value="F:ATP hydrolysis activity"/>
    <property type="evidence" value="ECO:0007669"/>
    <property type="project" value="InterPro"/>
</dbReference>
<dbReference type="GO" id="GO:0005525">
    <property type="term" value="F:GTP binding"/>
    <property type="evidence" value="ECO:0007669"/>
    <property type="project" value="UniProtKB-UniRule"/>
</dbReference>
<dbReference type="GO" id="GO:0043022">
    <property type="term" value="F:ribosome binding"/>
    <property type="evidence" value="ECO:0007669"/>
    <property type="project" value="TreeGrafter"/>
</dbReference>
<dbReference type="GO" id="GO:0042254">
    <property type="term" value="P:ribosome biogenesis"/>
    <property type="evidence" value="ECO:0007669"/>
    <property type="project" value="UniProtKB-KW"/>
</dbReference>
<dbReference type="CDD" id="cd01894">
    <property type="entry name" value="EngA1"/>
    <property type="match status" value="1"/>
</dbReference>
<dbReference type="CDD" id="cd01895">
    <property type="entry name" value="EngA2"/>
    <property type="match status" value="1"/>
</dbReference>
<dbReference type="FunFam" id="3.30.300.20:FF:000004">
    <property type="entry name" value="GTPase Der"/>
    <property type="match status" value="1"/>
</dbReference>
<dbReference type="FunFam" id="3.40.50.300:FF:000040">
    <property type="entry name" value="GTPase Der"/>
    <property type="match status" value="1"/>
</dbReference>
<dbReference type="FunFam" id="3.40.50.300:FF:000057">
    <property type="entry name" value="GTPase Der"/>
    <property type="match status" value="1"/>
</dbReference>
<dbReference type="Gene3D" id="3.30.300.20">
    <property type="match status" value="1"/>
</dbReference>
<dbReference type="Gene3D" id="3.40.50.300">
    <property type="entry name" value="P-loop containing nucleotide triphosphate hydrolases"/>
    <property type="match status" value="2"/>
</dbReference>
<dbReference type="HAMAP" id="MF_00195">
    <property type="entry name" value="GTPase_Der"/>
    <property type="match status" value="1"/>
</dbReference>
<dbReference type="InterPro" id="IPR003593">
    <property type="entry name" value="AAA+_ATPase"/>
</dbReference>
<dbReference type="InterPro" id="IPR031166">
    <property type="entry name" value="G_ENGA"/>
</dbReference>
<dbReference type="InterPro" id="IPR006073">
    <property type="entry name" value="GTP-bd"/>
</dbReference>
<dbReference type="InterPro" id="IPR016484">
    <property type="entry name" value="GTPase_Der"/>
</dbReference>
<dbReference type="InterPro" id="IPR032859">
    <property type="entry name" value="KH_dom-like"/>
</dbReference>
<dbReference type="InterPro" id="IPR015946">
    <property type="entry name" value="KH_dom-like_a/b"/>
</dbReference>
<dbReference type="InterPro" id="IPR027417">
    <property type="entry name" value="P-loop_NTPase"/>
</dbReference>
<dbReference type="InterPro" id="IPR005225">
    <property type="entry name" value="Small_GTP-bd"/>
</dbReference>
<dbReference type="NCBIfam" id="TIGR03594">
    <property type="entry name" value="GTPase_EngA"/>
    <property type="match status" value="1"/>
</dbReference>
<dbReference type="NCBIfam" id="NF002828">
    <property type="entry name" value="PRK03003.1"/>
    <property type="match status" value="1"/>
</dbReference>
<dbReference type="NCBIfam" id="TIGR00231">
    <property type="entry name" value="small_GTP"/>
    <property type="match status" value="2"/>
</dbReference>
<dbReference type="PANTHER" id="PTHR43834">
    <property type="entry name" value="GTPASE DER"/>
    <property type="match status" value="1"/>
</dbReference>
<dbReference type="PANTHER" id="PTHR43834:SF6">
    <property type="entry name" value="GTPASE DER"/>
    <property type="match status" value="1"/>
</dbReference>
<dbReference type="Pfam" id="PF14714">
    <property type="entry name" value="KH_dom-like"/>
    <property type="match status" value="1"/>
</dbReference>
<dbReference type="Pfam" id="PF01926">
    <property type="entry name" value="MMR_HSR1"/>
    <property type="match status" value="2"/>
</dbReference>
<dbReference type="PIRSF" id="PIRSF006485">
    <property type="entry name" value="GTP-binding_EngA"/>
    <property type="match status" value="1"/>
</dbReference>
<dbReference type="PRINTS" id="PR00326">
    <property type="entry name" value="GTP1OBG"/>
</dbReference>
<dbReference type="SMART" id="SM00382">
    <property type="entry name" value="AAA"/>
    <property type="match status" value="2"/>
</dbReference>
<dbReference type="SUPFAM" id="SSF52540">
    <property type="entry name" value="P-loop containing nucleoside triphosphate hydrolases"/>
    <property type="match status" value="2"/>
</dbReference>
<dbReference type="PROSITE" id="PS51712">
    <property type="entry name" value="G_ENGA"/>
    <property type="match status" value="2"/>
</dbReference>
<proteinExistence type="inferred from homology"/>
<feature type="chain" id="PRO_1000011667" description="GTPase Der">
    <location>
        <begin position="1"/>
        <end position="466"/>
    </location>
</feature>
<feature type="domain" description="EngA-type G 1">
    <location>
        <begin position="30"/>
        <end position="193"/>
    </location>
</feature>
<feature type="domain" description="EngA-type G 2">
    <location>
        <begin position="203"/>
        <end position="376"/>
    </location>
</feature>
<feature type="domain" description="KH-like" evidence="1">
    <location>
        <begin position="377"/>
        <end position="459"/>
    </location>
</feature>
<feature type="binding site" evidence="1">
    <location>
        <begin position="36"/>
        <end position="43"/>
    </location>
    <ligand>
        <name>GTP</name>
        <dbReference type="ChEBI" id="CHEBI:37565"/>
        <label>1</label>
    </ligand>
</feature>
<feature type="binding site" evidence="1">
    <location>
        <begin position="83"/>
        <end position="87"/>
    </location>
    <ligand>
        <name>GTP</name>
        <dbReference type="ChEBI" id="CHEBI:37565"/>
        <label>1</label>
    </ligand>
</feature>
<feature type="binding site" evidence="1">
    <location>
        <begin position="145"/>
        <end position="148"/>
    </location>
    <ligand>
        <name>GTP</name>
        <dbReference type="ChEBI" id="CHEBI:37565"/>
        <label>1</label>
    </ligand>
</feature>
<feature type="binding site" evidence="1">
    <location>
        <begin position="209"/>
        <end position="216"/>
    </location>
    <ligand>
        <name>GTP</name>
        <dbReference type="ChEBI" id="CHEBI:37565"/>
        <label>2</label>
    </ligand>
</feature>
<feature type="binding site" evidence="1">
    <location>
        <begin position="256"/>
        <end position="260"/>
    </location>
    <ligand>
        <name>GTP</name>
        <dbReference type="ChEBI" id="CHEBI:37565"/>
        <label>2</label>
    </ligand>
</feature>
<feature type="binding site" evidence="1">
    <location>
        <begin position="321"/>
        <end position="324"/>
    </location>
    <ligand>
        <name>GTP</name>
        <dbReference type="ChEBI" id="CHEBI:37565"/>
        <label>2</label>
    </ligand>
</feature>
<evidence type="ECO:0000255" key="1">
    <source>
        <dbReference type="HAMAP-Rule" id="MF_00195"/>
    </source>
</evidence>
<gene>
    <name evidence="1" type="primary">der</name>
    <name type="synonym">engA</name>
    <name type="ordered locus">MAV_3063</name>
</gene>
<name>DER_MYCA1</name>
<organism>
    <name type="scientific">Mycobacterium avium (strain 104)</name>
    <dbReference type="NCBI Taxonomy" id="243243"/>
    <lineage>
        <taxon>Bacteria</taxon>
        <taxon>Bacillati</taxon>
        <taxon>Actinomycetota</taxon>
        <taxon>Actinomycetes</taxon>
        <taxon>Mycobacteriales</taxon>
        <taxon>Mycobacteriaceae</taxon>
        <taxon>Mycobacterium</taxon>
        <taxon>Mycobacterium avium complex (MAC)</taxon>
    </lineage>
</organism>
<reference key="1">
    <citation type="submission" date="2006-10" db="EMBL/GenBank/DDBJ databases">
        <authorList>
            <person name="Fleischmann R.D."/>
            <person name="Dodson R.J."/>
            <person name="Haft D.H."/>
            <person name="Merkel J.S."/>
            <person name="Nelson W.C."/>
            <person name="Fraser C.M."/>
        </authorList>
    </citation>
    <scope>NUCLEOTIDE SEQUENCE [LARGE SCALE GENOMIC DNA]</scope>
    <source>
        <strain>104</strain>
    </source>
</reference>
<sequence>MTHDGTWSDESDWEAVEFELDEAAQAPPAPVVAVVGRPNVGKSTLVNRILGRREAVVQDVPGVTRDRVSYDALWTGRRFVVQDTGGWEPDAKGLQQLVAEQASVAMRTADAVILVVDALVGATTADEAAARILLRSGKPVFLAANKVDSDKAEADAAMLWSLGLGEPHPISAMHGRGVADLLDEVLAALPEVSEVAPRPGGPRRVALVGKPNVGKSSLLNKLAGDQRSVVHDVAGTTVDPVDSLIELGDRVWRFVDTAGLRRKVGQASGHEFYASVRTHSAIDAAEVVIVLIDASAPLTEQDQRVLSMVIEAGRALVLAFNKWDLVDEDRRELLEREIDRELVQLRWAPRVNISAKTGRAVAKLVPAMETALASWDTRIATGPLNSWLKEVVAATPPPVRGGKQPRILFATQAAARPPTFVLFTTGFLEAGYRRFLERRLREAFGFEGTPIRINVRVREKRGARRR</sequence>
<protein>
    <recommendedName>
        <fullName evidence="1">GTPase Der</fullName>
    </recommendedName>
    <alternativeName>
        <fullName evidence="1">GTP-binding protein EngA</fullName>
    </alternativeName>
</protein>
<keyword id="KW-0342">GTP-binding</keyword>
<keyword id="KW-0547">Nucleotide-binding</keyword>
<keyword id="KW-0677">Repeat</keyword>
<keyword id="KW-0690">Ribosome biogenesis</keyword>
<comment type="function">
    <text evidence="1">GTPase that plays an essential role in the late steps of ribosome biogenesis.</text>
</comment>
<comment type="subunit">
    <text evidence="1">Associates with the 50S ribosomal subunit.</text>
</comment>
<comment type="similarity">
    <text evidence="1">Belongs to the TRAFAC class TrmE-Era-EngA-EngB-Septin-like GTPase superfamily. EngA (Der) GTPase family.</text>
</comment>